<keyword id="KW-0130">Cell adhesion</keyword>
<keyword id="KW-1003">Cell membrane</keyword>
<keyword id="KW-0165">Cleavage on pair of basic residues</keyword>
<keyword id="KW-1015">Disulfide bond</keyword>
<keyword id="KW-0325">Glycoprotein</keyword>
<keyword id="KW-0333">Golgi apparatus</keyword>
<keyword id="KW-0336">GPI-anchor</keyword>
<keyword id="KW-0449">Lipoprotein</keyword>
<keyword id="KW-0472">Membrane</keyword>
<keyword id="KW-0597">Phosphoprotein</keyword>
<keyword id="KW-1185">Reference proteome</keyword>
<keyword id="KW-0964">Secreted</keyword>
<keyword id="KW-0732">Signal</keyword>
<name>MSLN_RAT</name>
<gene>
    <name type="primary">Msln</name>
    <name type="synonym">Erc</name>
    <name type="synonym">Mpf</name>
</gene>
<feature type="signal peptide" evidence="3">
    <location>
        <begin position="1"/>
        <end position="35"/>
    </location>
</feature>
<feature type="chain" id="PRO_0000253566" description="Mesothelin">
    <location>
        <begin position="36"/>
        <end position="600"/>
    </location>
</feature>
<feature type="chain" id="PRO_0000253567" description="Megakaryocyte-potentiating factor">
    <location>
        <begin position="36"/>
        <end position="288"/>
    </location>
</feature>
<feature type="chain" id="PRO_0000253568" description="Mesothelin, cleaved form">
    <location>
        <begin position="298"/>
        <end position="600"/>
    </location>
</feature>
<feature type="propeptide" id="PRO_0000253569" description="Removed in mature form" evidence="3">
    <location>
        <begin position="601"/>
        <end position="625"/>
    </location>
</feature>
<feature type="modified residue" description="Phosphoserine" evidence="2">
    <location>
        <position position="202"/>
    </location>
</feature>
<feature type="lipid moiety-binding region" description="GPI-anchor amidated serine" evidence="3">
    <location>
        <position position="600"/>
    </location>
</feature>
<feature type="glycosylation site" description="N-linked (GlcNAc...) asparagine" evidence="3">
    <location>
        <position position="390"/>
    </location>
</feature>
<feature type="glycosylation site" description="N-linked (GlcNAc...) asparagine" evidence="3">
    <location>
        <position position="488"/>
    </location>
</feature>
<feature type="glycosylation site" description="N-linked (GlcNAc...) asparagine" evidence="3">
    <location>
        <position position="517"/>
    </location>
</feature>
<feature type="disulfide bond" evidence="1">
    <location>
        <begin position="304"/>
        <end position="328"/>
    </location>
</feature>
<feature type="sequence conflict" description="In Ref. 1; BAB13512." evidence="5" ref="1">
    <original>M</original>
    <variation>T</variation>
    <location>
        <position position="70"/>
    </location>
</feature>
<dbReference type="EMBL" id="D87351">
    <property type="protein sequence ID" value="BAB13512.1"/>
    <property type="molecule type" value="mRNA"/>
</dbReference>
<dbReference type="EMBL" id="BC070934">
    <property type="protein sequence ID" value="AAH70934.1"/>
    <property type="molecule type" value="mRNA"/>
</dbReference>
<dbReference type="PIR" id="JC7362">
    <property type="entry name" value="JC7362"/>
</dbReference>
<dbReference type="RefSeq" id="NP_113846.1">
    <property type="nucleotide sequence ID" value="NM_031658.1"/>
</dbReference>
<dbReference type="RefSeq" id="XP_006246083.1">
    <property type="nucleotide sequence ID" value="XM_006246021.3"/>
</dbReference>
<dbReference type="RefSeq" id="XP_006246084.1">
    <property type="nucleotide sequence ID" value="XM_006246022.4"/>
</dbReference>
<dbReference type="SMR" id="Q9ERA7"/>
<dbReference type="FunCoup" id="Q9ERA7">
    <property type="interactions" value="21"/>
</dbReference>
<dbReference type="STRING" id="10116.ENSRNOP00000026395"/>
<dbReference type="GlyCosmos" id="Q9ERA7">
    <property type="glycosylation" value="3 sites, No reported glycans"/>
</dbReference>
<dbReference type="GlyGen" id="Q9ERA7">
    <property type="glycosylation" value="3 sites"/>
</dbReference>
<dbReference type="PhosphoSitePlus" id="Q9ERA7"/>
<dbReference type="PaxDb" id="10116-ENSRNOP00000026395"/>
<dbReference type="GeneID" id="60333"/>
<dbReference type="KEGG" id="rno:60333"/>
<dbReference type="UCSC" id="RGD:69333">
    <property type="organism name" value="rat"/>
</dbReference>
<dbReference type="AGR" id="RGD:69333"/>
<dbReference type="CTD" id="10232"/>
<dbReference type="RGD" id="69333">
    <property type="gene designation" value="Msln"/>
</dbReference>
<dbReference type="VEuPathDB" id="HostDB:ENSRNOG00000019445"/>
<dbReference type="eggNOG" id="ENOG502QRX1">
    <property type="taxonomic scope" value="Eukaryota"/>
</dbReference>
<dbReference type="HOGENOM" id="CLU_014552_3_0_1"/>
<dbReference type="InParanoid" id="Q9ERA7"/>
<dbReference type="OrthoDB" id="70414at9989"/>
<dbReference type="PhylomeDB" id="Q9ERA7"/>
<dbReference type="TreeFam" id="TF331713"/>
<dbReference type="Reactome" id="R-RNO-163125">
    <property type="pathway name" value="Post-translational modification: synthesis of GPI-anchored proteins"/>
</dbReference>
<dbReference type="Reactome" id="R-RNO-381426">
    <property type="pathway name" value="Regulation of Insulin-like Growth Factor (IGF) transport and uptake by Insulin-like Growth Factor Binding Proteins (IGFBPs)"/>
</dbReference>
<dbReference type="Reactome" id="R-RNO-8957275">
    <property type="pathway name" value="Post-translational protein phosphorylation"/>
</dbReference>
<dbReference type="PRO" id="PR:Q9ERA7"/>
<dbReference type="Proteomes" id="UP000002494">
    <property type="component" value="Chromosome 10"/>
</dbReference>
<dbReference type="Bgee" id="ENSRNOG00000019445">
    <property type="expression patterns" value="Expressed in pancreas and 17 other cell types or tissues"/>
</dbReference>
<dbReference type="GO" id="GO:0009986">
    <property type="term" value="C:cell surface"/>
    <property type="evidence" value="ECO:0000314"/>
    <property type="project" value="RGD"/>
</dbReference>
<dbReference type="GO" id="GO:0005615">
    <property type="term" value="C:extracellular space"/>
    <property type="evidence" value="ECO:0000314"/>
    <property type="project" value="RGD"/>
</dbReference>
<dbReference type="GO" id="GO:0005794">
    <property type="term" value="C:Golgi apparatus"/>
    <property type="evidence" value="ECO:0007669"/>
    <property type="project" value="UniProtKB-SubCell"/>
</dbReference>
<dbReference type="GO" id="GO:0005886">
    <property type="term" value="C:plasma membrane"/>
    <property type="evidence" value="ECO:0007669"/>
    <property type="project" value="UniProtKB-SubCell"/>
</dbReference>
<dbReference type="GO" id="GO:0098552">
    <property type="term" value="C:side of membrane"/>
    <property type="evidence" value="ECO:0007669"/>
    <property type="project" value="UniProtKB-KW"/>
</dbReference>
<dbReference type="GO" id="GO:0007160">
    <property type="term" value="P:cell-matrix adhesion"/>
    <property type="evidence" value="ECO:0000318"/>
    <property type="project" value="GO_Central"/>
</dbReference>
<dbReference type="GO" id="GO:0031016">
    <property type="term" value="P:pancreas development"/>
    <property type="evidence" value="ECO:0000270"/>
    <property type="project" value="RGD"/>
</dbReference>
<dbReference type="FunFam" id="1.20.970.40:FF:000001">
    <property type="entry name" value="Mesothelin"/>
    <property type="match status" value="1"/>
</dbReference>
<dbReference type="Gene3D" id="1.20.970.40">
    <property type="match status" value="1"/>
</dbReference>
<dbReference type="InterPro" id="IPR010335">
    <property type="entry name" value="Mesothelin"/>
</dbReference>
<dbReference type="InterPro" id="IPR026664">
    <property type="entry name" value="Stereocilin-rel"/>
</dbReference>
<dbReference type="PANTHER" id="PTHR23412:SF6">
    <property type="entry name" value="MESOTHELIN"/>
    <property type="match status" value="1"/>
</dbReference>
<dbReference type="PANTHER" id="PTHR23412">
    <property type="entry name" value="STEREOCILIN RELATED"/>
    <property type="match status" value="1"/>
</dbReference>
<dbReference type="Pfam" id="PF06060">
    <property type="entry name" value="Mesothelin"/>
    <property type="match status" value="1"/>
</dbReference>
<evidence type="ECO:0000250" key="1"/>
<evidence type="ECO:0000250" key="2">
    <source>
        <dbReference type="UniProtKB" id="Q13421"/>
    </source>
</evidence>
<evidence type="ECO:0000255" key="3"/>
<evidence type="ECO:0000269" key="4">
    <source>
    </source>
</evidence>
<evidence type="ECO:0000305" key="5"/>
<protein>
    <recommendedName>
        <fullName>Mesothelin</fullName>
    </recommendedName>
    <alternativeName>
        <fullName>Pre-pro-megakaryocyte-potentiating factor</fullName>
    </alternativeName>
    <alternativeName>
        <fullName>Protein expressed in renal carcinoma</fullName>
    </alternativeName>
    <component>
        <recommendedName>
            <fullName>Megakaryocyte-potentiating factor</fullName>
            <shortName>MPF</shortName>
        </recommendedName>
    </component>
    <component>
        <recommendedName>
            <fullName>Mesothelin, cleaved form</fullName>
        </recommendedName>
    </component>
</protein>
<comment type="function">
    <text evidence="1">Membrane-anchored forms may play a role in cellular adhesion.</text>
</comment>
<comment type="function">
    <text evidence="1">Megakaryocyte-potentiating factor (MPF) may potentiate megakaryocyte colony formation.</text>
</comment>
<comment type="subunit">
    <text evidence="1">Interacts with MUC16.</text>
</comment>
<comment type="subcellular location">
    <subcellularLocation>
        <location evidence="1">Cell membrane</location>
        <topology evidence="1">Lipid-anchor</topology>
        <topology evidence="1">GPI-anchor</topology>
    </subcellularLocation>
    <subcellularLocation>
        <location evidence="1">Golgi apparatus</location>
    </subcellularLocation>
</comment>
<comment type="subcellular location">
    <molecule>Megakaryocyte-potentiating factor</molecule>
    <subcellularLocation>
        <location evidence="1">Secreted</location>
    </subcellularLocation>
</comment>
<comment type="tissue specificity">
    <text evidence="4">Specifically expressed in lung. Overexpressed in hereditary renal carcinoma developed by Eker rats.</text>
</comment>
<comment type="PTM">
    <text evidence="1">Proteolytically cleaved by a furin-like convertase to generate megakaryocyte-potentiating factor (MPF), and the cleaved form of mesothelin.</text>
</comment>
<comment type="similarity">
    <text evidence="5">Belongs to the mesothelin family.</text>
</comment>
<proteinExistence type="evidence at transcript level"/>
<organism>
    <name type="scientific">Rattus norvegicus</name>
    <name type="common">Rat</name>
    <dbReference type="NCBI Taxonomy" id="10116"/>
    <lineage>
        <taxon>Eukaryota</taxon>
        <taxon>Metazoa</taxon>
        <taxon>Chordata</taxon>
        <taxon>Craniata</taxon>
        <taxon>Vertebrata</taxon>
        <taxon>Euteleostomi</taxon>
        <taxon>Mammalia</taxon>
        <taxon>Eutheria</taxon>
        <taxon>Euarchontoglires</taxon>
        <taxon>Glires</taxon>
        <taxon>Rodentia</taxon>
        <taxon>Myomorpha</taxon>
        <taxon>Muroidea</taxon>
        <taxon>Muridae</taxon>
        <taxon>Murinae</taxon>
        <taxon>Rattus</taxon>
    </lineage>
</organism>
<reference key="1">
    <citation type="journal article" date="2000" name="Biochem. Biophys. Res. Commun.">
        <title>Mapping and determination of the cDNA sequence of the Erc gene preferentially expressed in renal cell carcinoma in the Tsc2 gene mutant (Eker) rat model.</title>
        <authorList>
            <person name="Yamashita Y."/>
            <person name="Yokoyama M."/>
            <person name="Kobayashi E."/>
            <person name="Takai S."/>
            <person name="Hino O."/>
        </authorList>
    </citation>
    <scope>NUCLEOTIDE SEQUENCE [MRNA]</scope>
    <scope>TISSUE SPECIFICITY</scope>
</reference>
<reference key="2">
    <citation type="journal article" date="2004" name="Genome Res.">
        <title>The status, quality, and expansion of the NIH full-length cDNA project: the Mammalian Gene Collection (MGC).</title>
        <authorList>
            <consortium name="The MGC Project Team"/>
        </authorList>
    </citation>
    <scope>NUCLEOTIDE SEQUENCE [LARGE SCALE MRNA]</scope>
    <source>
        <tissue>Lung</tissue>
    </source>
</reference>
<sequence length="625" mass="68883">MALPTAQPLLGSCGSPICSRSFLLLLLSLGWLPLLQTQTTRTSQEAALLHAVTGTVDFASLPTGLFLGLMCDEVSGLSMGHAKELAMAVRQKNIVLQVHQLRCLARRLPKHLTNEELDALPLDLLLFLNPAMFPGQQACAHFFSLISKANVNVLPRRSLERQRLLTGALKCQGVYGFQVSETDARALGGLACDLPGEFVAKSSEVLLPWLARCGGPLDQGQAKAVREVLRSGRAPYGPPSTWSVSTLDALQGLLVVLDESIVHSIPKDVITEWLQGISREPSRLGSKWTVTHPRFRRDTEQKACPPGKEPNVVDENLIFYQNWELEACVDGTLLAGQMDLVNEIPFTYEQLSIFKHKLDKTYPQGYPESLIKQLGHFFRYVSPEDIRQWNVTSPDTVNTLLKVSKGQKMDAQVIALVACYLRGGGKLDEDIVKALDNIPLSYLCDFSPQDLHAIPSSVMWLVGLHDLDKCSQRHLGILYQKACSAFQNVSGLEYFEKIRTFLGGASREDLRALSQHNVSMDIATFKKLQVDALVGLSVAEVQKLLGPHIGDLKTEEDKSPVRDWLFRQQQKDLDSLGLGLQGGIPNGYLILDFNVREAFSSGAPLLGPGFVFAWIPALLSALRLS</sequence>
<accession>Q9ERA7</accession>
<accession>Q6IRG1</accession>